<name>CH10_BACCQ</name>
<gene>
    <name evidence="1" type="primary">groES</name>
    <name evidence="1" type="synonym">groS</name>
    <name type="ordered locus">BCQ_0297</name>
</gene>
<reference key="1">
    <citation type="journal article" date="2009" name="J. Bacteriol.">
        <title>Complete genome sequence of the extremophilic Bacillus cereus strain Q1 with industrial applications.</title>
        <authorList>
            <person name="Xiong Z."/>
            <person name="Jiang Y."/>
            <person name="Qi D."/>
            <person name="Lu H."/>
            <person name="Yang F."/>
            <person name="Yang J."/>
            <person name="Chen L."/>
            <person name="Sun L."/>
            <person name="Xu X."/>
            <person name="Xue Y."/>
            <person name="Zhu Y."/>
            <person name="Jin Q."/>
        </authorList>
    </citation>
    <scope>NUCLEOTIDE SEQUENCE [LARGE SCALE GENOMIC DNA]</scope>
    <source>
        <strain>Q1</strain>
    </source>
</reference>
<accession>B9J1H1</accession>
<comment type="function">
    <text evidence="1">Together with the chaperonin GroEL, plays an essential role in assisting protein folding. The GroEL-GroES system forms a nano-cage that allows encapsulation of the non-native substrate proteins and provides a physical environment optimized to promote and accelerate protein folding. GroES binds to the apical surface of the GroEL ring, thereby capping the opening of the GroEL channel.</text>
</comment>
<comment type="subunit">
    <text evidence="1">Heptamer of 7 subunits arranged in a ring. Interacts with the chaperonin GroEL.</text>
</comment>
<comment type="subcellular location">
    <subcellularLocation>
        <location evidence="1">Cytoplasm</location>
    </subcellularLocation>
</comment>
<comment type="similarity">
    <text evidence="1">Belongs to the GroES chaperonin family.</text>
</comment>
<keyword id="KW-0143">Chaperone</keyword>
<keyword id="KW-0963">Cytoplasm</keyword>
<keyword id="KW-0346">Stress response</keyword>
<sequence>MLKPLGDRVVIELVQAEEKTASGIVLPDTAKEKPQEGKVIAVGTGRVLENGERVALEVAAGDLIIFSKYAGTEVKYEGTDYLILRESDILAVIG</sequence>
<dbReference type="EMBL" id="CP000227">
    <property type="protein sequence ID" value="ACM10784.1"/>
    <property type="molecule type" value="Genomic_DNA"/>
</dbReference>
<dbReference type="SMR" id="B9J1H1"/>
<dbReference type="KEGG" id="bcq:BCQ_0297"/>
<dbReference type="HOGENOM" id="CLU_132825_2_0_9"/>
<dbReference type="Proteomes" id="UP000000441">
    <property type="component" value="Chromosome"/>
</dbReference>
<dbReference type="GO" id="GO:0005737">
    <property type="term" value="C:cytoplasm"/>
    <property type="evidence" value="ECO:0007669"/>
    <property type="project" value="UniProtKB-SubCell"/>
</dbReference>
<dbReference type="GO" id="GO:0005524">
    <property type="term" value="F:ATP binding"/>
    <property type="evidence" value="ECO:0007669"/>
    <property type="project" value="InterPro"/>
</dbReference>
<dbReference type="GO" id="GO:0046872">
    <property type="term" value="F:metal ion binding"/>
    <property type="evidence" value="ECO:0007669"/>
    <property type="project" value="TreeGrafter"/>
</dbReference>
<dbReference type="GO" id="GO:0044183">
    <property type="term" value="F:protein folding chaperone"/>
    <property type="evidence" value="ECO:0007669"/>
    <property type="project" value="InterPro"/>
</dbReference>
<dbReference type="GO" id="GO:0051087">
    <property type="term" value="F:protein-folding chaperone binding"/>
    <property type="evidence" value="ECO:0007669"/>
    <property type="project" value="TreeGrafter"/>
</dbReference>
<dbReference type="GO" id="GO:0051082">
    <property type="term" value="F:unfolded protein binding"/>
    <property type="evidence" value="ECO:0007669"/>
    <property type="project" value="TreeGrafter"/>
</dbReference>
<dbReference type="GO" id="GO:0051085">
    <property type="term" value="P:chaperone cofactor-dependent protein refolding"/>
    <property type="evidence" value="ECO:0007669"/>
    <property type="project" value="TreeGrafter"/>
</dbReference>
<dbReference type="CDD" id="cd00320">
    <property type="entry name" value="cpn10"/>
    <property type="match status" value="1"/>
</dbReference>
<dbReference type="FunFam" id="2.30.33.40:FF:000001">
    <property type="entry name" value="10 kDa chaperonin"/>
    <property type="match status" value="1"/>
</dbReference>
<dbReference type="Gene3D" id="2.30.33.40">
    <property type="entry name" value="GroES chaperonin"/>
    <property type="match status" value="1"/>
</dbReference>
<dbReference type="HAMAP" id="MF_00580">
    <property type="entry name" value="CH10"/>
    <property type="match status" value="1"/>
</dbReference>
<dbReference type="InterPro" id="IPR020818">
    <property type="entry name" value="Chaperonin_GroES"/>
</dbReference>
<dbReference type="InterPro" id="IPR037124">
    <property type="entry name" value="Chaperonin_GroES_sf"/>
</dbReference>
<dbReference type="InterPro" id="IPR018369">
    <property type="entry name" value="Chaprnonin_Cpn10_CS"/>
</dbReference>
<dbReference type="InterPro" id="IPR011032">
    <property type="entry name" value="GroES-like_sf"/>
</dbReference>
<dbReference type="NCBIfam" id="NF001527">
    <property type="entry name" value="PRK00364.1-2"/>
    <property type="match status" value="1"/>
</dbReference>
<dbReference type="NCBIfam" id="NF001530">
    <property type="entry name" value="PRK00364.1-6"/>
    <property type="match status" value="1"/>
</dbReference>
<dbReference type="NCBIfam" id="NF001531">
    <property type="entry name" value="PRK00364.2-2"/>
    <property type="match status" value="1"/>
</dbReference>
<dbReference type="NCBIfam" id="NF001533">
    <property type="entry name" value="PRK00364.2-4"/>
    <property type="match status" value="1"/>
</dbReference>
<dbReference type="NCBIfam" id="NF001534">
    <property type="entry name" value="PRK00364.2-5"/>
    <property type="match status" value="1"/>
</dbReference>
<dbReference type="PANTHER" id="PTHR10772">
    <property type="entry name" value="10 KDA HEAT SHOCK PROTEIN"/>
    <property type="match status" value="1"/>
</dbReference>
<dbReference type="PANTHER" id="PTHR10772:SF58">
    <property type="entry name" value="CO-CHAPERONIN GROES"/>
    <property type="match status" value="1"/>
</dbReference>
<dbReference type="Pfam" id="PF00166">
    <property type="entry name" value="Cpn10"/>
    <property type="match status" value="1"/>
</dbReference>
<dbReference type="PRINTS" id="PR00297">
    <property type="entry name" value="CHAPERONIN10"/>
</dbReference>
<dbReference type="SMART" id="SM00883">
    <property type="entry name" value="Cpn10"/>
    <property type="match status" value="1"/>
</dbReference>
<dbReference type="SUPFAM" id="SSF50129">
    <property type="entry name" value="GroES-like"/>
    <property type="match status" value="1"/>
</dbReference>
<dbReference type="PROSITE" id="PS00681">
    <property type="entry name" value="CHAPERONINS_CPN10"/>
    <property type="match status" value="1"/>
</dbReference>
<protein>
    <recommendedName>
        <fullName evidence="1">Co-chaperonin GroES</fullName>
    </recommendedName>
    <alternativeName>
        <fullName evidence="1">10 kDa chaperonin</fullName>
    </alternativeName>
    <alternativeName>
        <fullName evidence="1">Chaperonin-10</fullName>
        <shortName evidence="1">Cpn10</shortName>
    </alternativeName>
</protein>
<evidence type="ECO:0000255" key="1">
    <source>
        <dbReference type="HAMAP-Rule" id="MF_00580"/>
    </source>
</evidence>
<proteinExistence type="inferred from homology"/>
<organism>
    <name type="scientific">Bacillus cereus (strain Q1)</name>
    <dbReference type="NCBI Taxonomy" id="361100"/>
    <lineage>
        <taxon>Bacteria</taxon>
        <taxon>Bacillati</taxon>
        <taxon>Bacillota</taxon>
        <taxon>Bacilli</taxon>
        <taxon>Bacillales</taxon>
        <taxon>Bacillaceae</taxon>
        <taxon>Bacillus</taxon>
        <taxon>Bacillus cereus group</taxon>
    </lineage>
</organism>
<feature type="chain" id="PRO_1000146887" description="Co-chaperonin GroES">
    <location>
        <begin position="1"/>
        <end position="94"/>
    </location>
</feature>